<sequence length="479" mass="53204">MGSTKPRPSGKNSISHAQSLPGKTFIIDNGAYNMKAGYAPDSQPLDDEEIALSACAAIPNAIVKTRANRTYVGAQIGTNVTDWNEMLFRRPVEKGYTVNWEAQKEIWENSFFDERTVRSKELHIADPEDVTIIFTEAPNALPALQKNADEIIMEEWGFGGYLRCVVGMAKPFALNTGPSLNAWNEIQSLFEDSVLSQPRAVASPAECLLVVDSGYSHTVITPVYRGRPLQRGIRRLDLGGKHLTNYLKELVSMRQYNMVDETYIMNEVKESVCFVSNDFNRDLERTWKGNRKRGQPDPTDGVVVDYVLPDPNGGKRGFMRPHDPLLGSKKRKAVLAGASAEQLNEDVLVLGNERFTVPEILFTPSDIGMKSAGIPDIILQSLSVLPTGLHPAFLANVLVVGGNSLLPGFMERLETELRQIASAECVVRVRRPKDPIRFAWLGGSRLATNKEELKKVAITRQEYQEHGSSWTTRKFSGAL</sequence>
<organism>
    <name type="scientific">Emericella nidulans (strain FGSC A4 / ATCC 38163 / CBS 112.46 / NRRL 194 / M139)</name>
    <name type="common">Aspergillus nidulans</name>
    <dbReference type="NCBI Taxonomy" id="227321"/>
    <lineage>
        <taxon>Eukaryota</taxon>
        <taxon>Fungi</taxon>
        <taxon>Dikarya</taxon>
        <taxon>Ascomycota</taxon>
        <taxon>Pezizomycotina</taxon>
        <taxon>Eurotiomycetes</taxon>
        <taxon>Eurotiomycetidae</taxon>
        <taxon>Eurotiales</taxon>
        <taxon>Aspergillaceae</taxon>
        <taxon>Aspergillus</taxon>
        <taxon>Aspergillus subgen. Nidulantes</taxon>
    </lineage>
</organism>
<reference key="1">
    <citation type="journal article" date="2005" name="Nature">
        <title>Sequencing of Aspergillus nidulans and comparative analysis with A. fumigatus and A. oryzae.</title>
        <authorList>
            <person name="Galagan J.E."/>
            <person name="Calvo S.E."/>
            <person name="Cuomo C."/>
            <person name="Ma L.-J."/>
            <person name="Wortman J.R."/>
            <person name="Batzoglou S."/>
            <person name="Lee S.-I."/>
            <person name="Bastuerkmen M."/>
            <person name="Spevak C.C."/>
            <person name="Clutterbuck J."/>
            <person name="Kapitonov V."/>
            <person name="Jurka J."/>
            <person name="Scazzocchio C."/>
            <person name="Farman M.L."/>
            <person name="Butler J."/>
            <person name="Purcell S."/>
            <person name="Harris S."/>
            <person name="Braus G.H."/>
            <person name="Draht O."/>
            <person name="Busch S."/>
            <person name="D'Enfert C."/>
            <person name="Bouchier C."/>
            <person name="Goldman G.H."/>
            <person name="Bell-Pedersen D."/>
            <person name="Griffiths-Jones S."/>
            <person name="Doonan J.H."/>
            <person name="Yu J."/>
            <person name="Vienken K."/>
            <person name="Pain A."/>
            <person name="Freitag M."/>
            <person name="Selker E.U."/>
            <person name="Archer D.B."/>
            <person name="Penalva M.A."/>
            <person name="Oakley B.R."/>
            <person name="Momany M."/>
            <person name="Tanaka T."/>
            <person name="Kumagai T."/>
            <person name="Asai K."/>
            <person name="Machida M."/>
            <person name="Nierman W.C."/>
            <person name="Denning D.W."/>
            <person name="Caddick M.X."/>
            <person name="Hynes M."/>
            <person name="Paoletti M."/>
            <person name="Fischer R."/>
            <person name="Miller B.L."/>
            <person name="Dyer P.S."/>
            <person name="Sachs M.S."/>
            <person name="Osmani S.A."/>
            <person name="Birren B.W."/>
        </authorList>
    </citation>
    <scope>NUCLEOTIDE SEQUENCE [LARGE SCALE GENOMIC DNA]</scope>
    <source>
        <strain>FGSC A4 / ATCC 38163 / CBS 112.46 / NRRL 194 / M139</strain>
    </source>
</reference>
<reference key="2">
    <citation type="journal article" date="2009" name="Fungal Genet. Biol.">
        <title>The 2008 update of the Aspergillus nidulans genome annotation: a community effort.</title>
        <authorList>
            <person name="Wortman J.R."/>
            <person name="Gilsenan J.M."/>
            <person name="Joardar V."/>
            <person name="Deegan J."/>
            <person name="Clutterbuck J."/>
            <person name="Andersen M.R."/>
            <person name="Archer D."/>
            <person name="Bencina M."/>
            <person name="Braus G."/>
            <person name="Coutinho P."/>
            <person name="von Dohren H."/>
            <person name="Doonan J."/>
            <person name="Driessen A.J."/>
            <person name="Durek P."/>
            <person name="Espeso E."/>
            <person name="Fekete E."/>
            <person name="Flipphi M."/>
            <person name="Estrada C.G."/>
            <person name="Geysens S."/>
            <person name="Goldman G."/>
            <person name="de Groot P.W."/>
            <person name="Hansen K."/>
            <person name="Harris S.D."/>
            <person name="Heinekamp T."/>
            <person name="Helmstaedt K."/>
            <person name="Henrissat B."/>
            <person name="Hofmann G."/>
            <person name="Homan T."/>
            <person name="Horio T."/>
            <person name="Horiuchi H."/>
            <person name="James S."/>
            <person name="Jones M."/>
            <person name="Karaffa L."/>
            <person name="Karanyi Z."/>
            <person name="Kato M."/>
            <person name="Keller N."/>
            <person name="Kelly D.E."/>
            <person name="Kiel J.A."/>
            <person name="Kim J.M."/>
            <person name="van der Klei I.J."/>
            <person name="Klis F.M."/>
            <person name="Kovalchuk A."/>
            <person name="Krasevec N."/>
            <person name="Kubicek C.P."/>
            <person name="Liu B."/>
            <person name="Maccabe A."/>
            <person name="Meyer V."/>
            <person name="Mirabito P."/>
            <person name="Miskei M."/>
            <person name="Mos M."/>
            <person name="Mullins J."/>
            <person name="Nelson D.R."/>
            <person name="Nielsen J."/>
            <person name="Oakley B.R."/>
            <person name="Osmani S.A."/>
            <person name="Pakula T."/>
            <person name="Paszewski A."/>
            <person name="Paulsen I."/>
            <person name="Pilsyk S."/>
            <person name="Pocsi I."/>
            <person name="Punt P.J."/>
            <person name="Ram A.F."/>
            <person name="Ren Q."/>
            <person name="Robellet X."/>
            <person name="Robson G."/>
            <person name="Seiboth B."/>
            <person name="van Solingen P."/>
            <person name="Specht T."/>
            <person name="Sun J."/>
            <person name="Taheri-Talesh N."/>
            <person name="Takeshita N."/>
            <person name="Ussery D."/>
            <person name="vanKuyk P.A."/>
            <person name="Visser H."/>
            <person name="van de Vondervoort P.J."/>
            <person name="de Vries R.P."/>
            <person name="Walton J."/>
            <person name="Xiang X."/>
            <person name="Xiong Y."/>
            <person name="Zeng A.P."/>
            <person name="Brandt B.W."/>
            <person name="Cornell M.J."/>
            <person name="van den Hondel C.A."/>
            <person name="Visser J."/>
            <person name="Oliver S.G."/>
            <person name="Turner G."/>
        </authorList>
    </citation>
    <scope>GENOME REANNOTATION</scope>
    <source>
        <strain>FGSC A4 / ATCC 38163 / CBS 112.46 / NRRL 194 / M139</strain>
    </source>
</reference>
<evidence type="ECO:0000250" key="1"/>
<evidence type="ECO:0000305" key="2"/>
<name>ARP6_EMENI</name>
<dbReference type="EMBL" id="AACD01000117">
    <property type="protein sequence ID" value="EAA61655.1"/>
    <property type="molecule type" value="Genomic_DNA"/>
</dbReference>
<dbReference type="EMBL" id="BN001304">
    <property type="protein sequence ID" value="CBF79267.1"/>
    <property type="molecule type" value="Genomic_DNA"/>
</dbReference>
<dbReference type="RefSeq" id="XP_664613.1">
    <property type="nucleotide sequence ID" value="XM_659521.1"/>
</dbReference>
<dbReference type="SMR" id="Q5AXH1"/>
<dbReference type="FunCoup" id="Q5AXH1">
    <property type="interactions" value="298"/>
</dbReference>
<dbReference type="STRING" id="227321.Q5AXH1"/>
<dbReference type="EnsemblFungi" id="CBF79267">
    <property type="protein sequence ID" value="CBF79267"/>
    <property type="gene ID" value="ANIA_07009"/>
</dbReference>
<dbReference type="KEGG" id="ani:ANIA_07009"/>
<dbReference type="VEuPathDB" id="FungiDB:AN7009"/>
<dbReference type="eggNOG" id="KOG0680">
    <property type="taxonomic scope" value="Eukaryota"/>
</dbReference>
<dbReference type="HOGENOM" id="CLU_027965_1_1_1"/>
<dbReference type="InParanoid" id="Q5AXH1"/>
<dbReference type="OMA" id="FFEEYEC"/>
<dbReference type="OrthoDB" id="6220758at2759"/>
<dbReference type="Proteomes" id="UP000000560">
    <property type="component" value="Chromosome IV"/>
</dbReference>
<dbReference type="GO" id="GO:0005737">
    <property type="term" value="C:cytoplasm"/>
    <property type="evidence" value="ECO:0007669"/>
    <property type="project" value="UniProtKB-SubCell"/>
</dbReference>
<dbReference type="GO" id="GO:0005856">
    <property type="term" value="C:cytoskeleton"/>
    <property type="evidence" value="ECO:0007669"/>
    <property type="project" value="UniProtKB-SubCell"/>
</dbReference>
<dbReference type="GO" id="GO:0000812">
    <property type="term" value="C:Swr1 complex"/>
    <property type="evidence" value="ECO:0000318"/>
    <property type="project" value="GO_Central"/>
</dbReference>
<dbReference type="GO" id="GO:0031491">
    <property type="term" value="F:nucleosome binding"/>
    <property type="evidence" value="ECO:0000318"/>
    <property type="project" value="GO_Central"/>
</dbReference>
<dbReference type="GO" id="GO:0006338">
    <property type="term" value="P:chromatin remodeling"/>
    <property type="evidence" value="ECO:0007669"/>
    <property type="project" value="EnsemblFungi"/>
</dbReference>
<dbReference type="CDD" id="cd10210">
    <property type="entry name" value="ASKHA_NBD_Arp6"/>
    <property type="match status" value="1"/>
</dbReference>
<dbReference type="FunFam" id="2.30.36.70:FF:000011">
    <property type="entry name" value="Actin family protein"/>
    <property type="match status" value="1"/>
</dbReference>
<dbReference type="FunFam" id="3.90.640.10:FF:000036">
    <property type="entry name" value="Actin-like protein ARP6"/>
    <property type="match status" value="1"/>
</dbReference>
<dbReference type="FunFam" id="3.30.420.40:FF:000058">
    <property type="entry name" value="Putative actin-related protein 5"/>
    <property type="match status" value="1"/>
</dbReference>
<dbReference type="Gene3D" id="3.30.420.40">
    <property type="match status" value="2"/>
</dbReference>
<dbReference type="Gene3D" id="2.30.36.70">
    <property type="entry name" value="Actin, Chain A, domain 2"/>
    <property type="match status" value="1"/>
</dbReference>
<dbReference type="Gene3D" id="3.90.640.10">
    <property type="entry name" value="Actin, Chain A, domain 4"/>
    <property type="match status" value="1"/>
</dbReference>
<dbReference type="InterPro" id="IPR004000">
    <property type="entry name" value="Actin"/>
</dbReference>
<dbReference type="InterPro" id="IPR043129">
    <property type="entry name" value="ATPase_NBD"/>
</dbReference>
<dbReference type="PANTHER" id="PTHR11937">
    <property type="entry name" value="ACTIN"/>
    <property type="match status" value="1"/>
</dbReference>
<dbReference type="Pfam" id="PF00022">
    <property type="entry name" value="Actin"/>
    <property type="match status" value="1"/>
</dbReference>
<dbReference type="SMART" id="SM00268">
    <property type="entry name" value="ACTIN"/>
    <property type="match status" value="1"/>
</dbReference>
<dbReference type="SUPFAM" id="SSF53067">
    <property type="entry name" value="Actin-like ATPase domain"/>
    <property type="match status" value="2"/>
</dbReference>
<comment type="function">
    <text evidence="1">Component of the SWR1 complex which mediates the ATP-dependent exchange of histone H2A for the H2A variant HZT1 leading to transcriptional regulation of selected genes by chromatin remodeling. Involved in chromosome stability (By similarity).</text>
</comment>
<comment type="subunit">
    <text evidence="1">Component of the SWR1 chromatin remodeling complex.</text>
</comment>
<comment type="subcellular location">
    <subcellularLocation>
        <location evidence="1">Cytoplasm</location>
    </subcellularLocation>
    <subcellularLocation>
        <location evidence="1">Cytoplasm</location>
        <location evidence="1">Cytoskeleton</location>
    </subcellularLocation>
    <subcellularLocation>
        <location evidence="1">Nucleus</location>
    </subcellularLocation>
</comment>
<comment type="similarity">
    <text evidence="2">Belongs to the actin family. ARP6 subfamily.</text>
</comment>
<gene>
    <name type="primary">arp6</name>
    <name type="ORF">AN7009</name>
</gene>
<accession>Q5AXH1</accession>
<accession>C8VC89</accession>
<protein>
    <recommendedName>
        <fullName>Actin-like protein arp6</fullName>
    </recommendedName>
</protein>
<feature type="chain" id="PRO_0000089116" description="Actin-like protein arp6">
    <location>
        <begin position="1"/>
        <end position="479"/>
    </location>
</feature>
<keyword id="KW-0010">Activator</keyword>
<keyword id="KW-0156">Chromatin regulator</keyword>
<keyword id="KW-0963">Cytoplasm</keyword>
<keyword id="KW-0206">Cytoskeleton</keyword>
<keyword id="KW-0539">Nucleus</keyword>
<keyword id="KW-1185">Reference proteome</keyword>
<keyword id="KW-0804">Transcription</keyword>
<keyword id="KW-0805">Transcription regulation</keyword>
<proteinExistence type="inferred from homology"/>